<proteinExistence type="inferred from homology"/>
<evidence type="ECO:0000255" key="1"/>
<evidence type="ECO:0000255" key="2">
    <source>
        <dbReference type="PROSITE-ProRule" id="PRU00521"/>
    </source>
</evidence>
<evidence type="ECO:0000305" key="3"/>
<keyword id="KW-1003">Cell membrane</keyword>
<keyword id="KW-1015">Disulfide bond</keyword>
<keyword id="KW-0297">G-protein coupled receptor</keyword>
<keyword id="KW-0325">Glycoprotein</keyword>
<keyword id="KW-0472">Membrane</keyword>
<keyword id="KW-0552">Olfaction</keyword>
<keyword id="KW-0675">Receptor</keyword>
<keyword id="KW-1185">Reference proteome</keyword>
<keyword id="KW-0716">Sensory transduction</keyword>
<keyword id="KW-0807">Transducer</keyword>
<keyword id="KW-0812">Transmembrane</keyword>
<keyword id="KW-1133">Transmembrane helix</keyword>
<gene>
    <name type="primary">OR51A2</name>
</gene>
<sequence length="313" mass="35078">MSIINTSYVEITTFFLVGMPGLEYAHIWISIPICSMYLIAILGNGTILFIIKTEPSLHGPMYYFLSMLAMSDLGLSLSSLPTVLSIFLFNAPETSSSACFAQEFFIHGFSVLESSVLLIMSFDRFLAIHNPLRYTSILTTVRVAQIGIVFSFKSMLLVLPFPFTLRSLRYCKKNQLSHSYCLHQDVMKLACSDNRIDVIYGFFGALCLMVDFILIAVSYTLILKTVPGIASKKEELKALNTCVSHICAVIIFYLPIINLAVVHRFAGHVSPLINVLMANVLLLVPPLMKPIVYCVKTKQIRVRVVAKLCQWKI</sequence>
<organism>
    <name type="scientific">Homo sapiens</name>
    <name type="common">Human</name>
    <dbReference type="NCBI Taxonomy" id="9606"/>
    <lineage>
        <taxon>Eukaryota</taxon>
        <taxon>Metazoa</taxon>
        <taxon>Chordata</taxon>
        <taxon>Craniata</taxon>
        <taxon>Vertebrata</taxon>
        <taxon>Euteleostomi</taxon>
        <taxon>Mammalia</taxon>
        <taxon>Eutheria</taxon>
        <taxon>Euarchontoglires</taxon>
        <taxon>Primates</taxon>
        <taxon>Haplorrhini</taxon>
        <taxon>Catarrhini</taxon>
        <taxon>Hominidae</taxon>
        <taxon>Homo</taxon>
    </lineage>
</organism>
<reference key="1">
    <citation type="submission" date="2001-07" db="EMBL/GenBank/DDBJ databases">
        <title>Genome-wide discovery and analysis of human seven transmembrane helix receptor genes.</title>
        <authorList>
            <person name="Suwa M."/>
            <person name="Sato T."/>
            <person name="Okouchi I."/>
            <person name="Arita M."/>
            <person name="Futami K."/>
            <person name="Matsumoto S."/>
            <person name="Tsutsumi S."/>
            <person name="Aburatani H."/>
            <person name="Asai K."/>
            <person name="Akiyama Y."/>
        </authorList>
    </citation>
    <scope>NUCLEOTIDE SEQUENCE [GENOMIC DNA]</scope>
</reference>
<comment type="function">
    <text evidence="3">Odorant receptor.</text>
</comment>
<comment type="subcellular location">
    <subcellularLocation>
        <location>Cell membrane</location>
        <topology>Multi-pass membrane protein</topology>
    </subcellularLocation>
</comment>
<comment type="similarity">
    <text evidence="2">Belongs to the G-protein coupled receptor 1 family.</text>
</comment>
<comment type="online information" name="Human Olfactory Receptor Data Exploratorium (HORDE)">
    <link uri="http://genome.weizmann.ac.il/horde/card/index/symbol:OR51A2"/>
</comment>
<dbReference type="EMBL" id="AB065797">
    <property type="protein sequence ID" value="BAC06016.1"/>
    <property type="molecule type" value="Genomic_DNA"/>
</dbReference>
<dbReference type="CCDS" id="CCDS31368.1"/>
<dbReference type="RefSeq" id="NP_001004748.1">
    <property type="nucleotide sequence ID" value="NM_001004748.1"/>
</dbReference>
<dbReference type="SMR" id="Q8NGJ7"/>
<dbReference type="FunCoup" id="Q8NGJ7">
    <property type="interactions" value="456"/>
</dbReference>
<dbReference type="IntAct" id="Q8NGJ7">
    <property type="interactions" value="1"/>
</dbReference>
<dbReference type="MINT" id="Q8NGJ7"/>
<dbReference type="STRING" id="9606.ENSP00000369729"/>
<dbReference type="GlyCosmos" id="Q8NGJ7">
    <property type="glycosylation" value="1 site, No reported glycans"/>
</dbReference>
<dbReference type="GlyGen" id="Q8NGJ7">
    <property type="glycosylation" value="1 site"/>
</dbReference>
<dbReference type="BioMuta" id="OR51A2"/>
<dbReference type="DMDM" id="38372709"/>
<dbReference type="jPOST" id="Q8NGJ7"/>
<dbReference type="PaxDb" id="9606-ENSP00000369729"/>
<dbReference type="Antibodypedia" id="57570">
    <property type="antibodies" value="54 antibodies from 19 providers"/>
</dbReference>
<dbReference type="DNASU" id="401667"/>
<dbReference type="Ensembl" id="ENST00000380371.1">
    <property type="protein sequence ID" value="ENSP00000369729.1"/>
    <property type="gene ID" value="ENSG00000205496.1"/>
</dbReference>
<dbReference type="GeneID" id="401667"/>
<dbReference type="KEGG" id="hsa:401667"/>
<dbReference type="MANE-Select" id="ENST00000380371.1">
    <property type="protein sequence ID" value="ENSP00000369729.1"/>
    <property type="RefSeq nucleotide sequence ID" value="NM_001004748.1"/>
    <property type="RefSeq protein sequence ID" value="NP_001004748.1"/>
</dbReference>
<dbReference type="UCSC" id="uc010qyt.2">
    <property type="organism name" value="human"/>
</dbReference>
<dbReference type="AGR" id="HGNC:14764"/>
<dbReference type="CTD" id="401667"/>
<dbReference type="GeneCards" id="OR51A2"/>
<dbReference type="HGNC" id="HGNC:14764">
    <property type="gene designation" value="OR51A2"/>
</dbReference>
<dbReference type="HPA" id="ENSG00000205496">
    <property type="expression patterns" value="Not detected"/>
</dbReference>
<dbReference type="neXtProt" id="NX_Q8NGJ7"/>
<dbReference type="PharmGKB" id="PA32355"/>
<dbReference type="VEuPathDB" id="HostDB:ENSG00000205496"/>
<dbReference type="eggNOG" id="ENOG502RU39">
    <property type="taxonomic scope" value="Eukaryota"/>
</dbReference>
<dbReference type="GeneTree" id="ENSGT01130000278286"/>
<dbReference type="HOGENOM" id="CLU_012526_0_0_1"/>
<dbReference type="InParanoid" id="Q8NGJ7"/>
<dbReference type="OMA" id="CPLINSS"/>
<dbReference type="OrthoDB" id="9444602at2759"/>
<dbReference type="PAN-GO" id="Q8NGJ7">
    <property type="GO annotations" value="2 GO annotations based on evolutionary models"/>
</dbReference>
<dbReference type="PhylomeDB" id="Q8NGJ7"/>
<dbReference type="TreeFam" id="TF342735"/>
<dbReference type="PathwayCommons" id="Q8NGJ7"/>
<dbReference type="Reactome" id="R-HSA-9752946">
    <property type="pathway name" value="Expression and translocation of olfactory receptors"/>
</dbReference>
<dbReference type="SignaLink" id="Q8NGJ7"/>
<dbReference type="BioGRID-ORCS" id="401667">
    <property type="hits" value="13 hits in 658 CRISPR screens"/>
</dbReference>
<dbReference type="GenomeRNAi" id="401667"/>
<dbReference type="Pharos" id="Q8NGJ7">
    <property type="development level" value="Tdark"/>
</dbReference>
<dbReference type="PRO" id="PR:Q8NGJ7"/>
<dbReference type="Proteomes" id="UP000005640">
    <property type="component" value="Chromosome 11"/>
</dbReference>
<dbReference type="RNAct" id="Q8NGJ7">
    <property type="molecule type" value="protein"/>
</dbReference>
<dbReference type="Bgee" id="ENSG00000205496">
    <property type="expression patterns" value="Expressed in cardiovascular system and 3 other cell types or tissues"/>
</dbReference>
<dbReference type="ExpressionAtlas" id="Q8NGJ7">
    <property type="expression patterns" value="baseline and differential"/>
</dbReference>
<dbReference type="GO" id="GO:0005886">
    <property type="term" value="C:plasma membrane"/>
    <property type="evidence" value="ECO:0000318"/>
    <property type="project" value="GO_Central"/>
</dbReference>
<dbReference type="GO" id="GO:0004930">
    <property type="term" value="F:G protein-coupled receptor activity"/>
    <property type="evidence" value="ECO:0007669"/>
    <property type="project" value="UniProtKB-KW"/>
</dbReference>
<dbReference type="GO" id="GO:0004984">
    <property type="term" value="F:olfactory receptor activity"/>
    <property type="evidence" value="ECO:0000318"/>
    <property type="project" value="GO_Central"/>
</dbReference>
<dbReference type="CDD" id="cd15222">
    <property type="entry name" value="7tmA_OR51-like"/>
    <property type="match status" value="1"/>
</dbReference>
<dbReference type="FunFam" id="1.20.1070.10:FF:000002">
    <property type="entry name" value="Olfactory receptor"/>
    <property type="match status" value="1"/>
</dbReference>
<dbReference type="Gene3D" id="1.20.1070.10">
    <property type="entry name" value="Rhodopsin 7-helix transmembrane proteins"/>
    <property type="match status" value="1"/>
</dbReference>
<dbReference type="InterPro" id="IPR000276">
    <property type="entry name" value="GPCR_Rhodpsn"/>
</dbReference>
<dbReference type="InterPro" id="IPR017452">
    <property type="entry name" value="GPCR_Rhodpsn_7TM"/>
</dbReference>
<dbReference type="InterPro" id="IPR000725">
    <property type="entry name" value="Olfact_rcpt"/>
</dbReference>
<dbReference type="InterPro" id="IPR050402">
    <property type="entry name" value="OR51/52/56-like"/>
</dbReference>
<dbReference type="PANTHER" id="PTHR26450:SF168">
    <property type="entry name" value="OLFACTORY RECEPTOR 51A2-RELATED"/>
    <property type="match status" value="1"/>
</dbReference>
<dbReference type="PANTHER" id="PTHR26450">
    <property type="entry name" value="OLFACTORY RECEPTOR 56B1-RELATED"/>
    <property type="match status" value="1"/>
</dbReference>
<dbReference type="Pfam" id="PF13853">
    <property type="entry name" value="7tm_4"/>
    <property type="match status" value="1"/>
</dbReference>
<dbReference type="PRINTS" id="PR00237">
    <property type="entry name" value="GPCRRHODOPSN"/>
</dbReference>
<dbReference type="PRINTS" id="PR00245">
    <property type="entry name" value="OLFACTORYR"/>
</dbReference>
<dbReference type="SMART" id="SM01381">
    <property type="entry name" value="7TM_GPCR_Srsx"/>
    <property type="match status" value="1"/>
</dbReference>
<dbReference type="SUPFAM" id="SSF81321">
    <property type="entry name" value="Family A G protein-coupled receptor-like"/>
    <property type="match status" value="1"/>
</dbReference>
<dbReference type="PROSITE" id="PS00237">
    <property type="entry name" value="G_PROTEIN_RECEP_F1_1"/>
    <property type="match status" value="1"/>
</dbReference>
<dbReference type="PROSITE" id="PS50262">
    <property type="entry name" value="G_PROTEIN_RECEP_F1_2"/>
    <property type="match status" value="1"/>
</dbReference>
<accession>Q8NGJ7</accession>
<protein>
    <recommendedName>
        <fullName>Olfactory receptor 51A2</fullName>
    </recommendedName>
</protein>
<name>O51A2_HUMAN</name>
<feature type="chain" id="PRO_0000150742" description="Olfactory receptor 51A2">
    <location>
        <begin position="1"/>
        <end position="313"/>
    </location>
</feature>
<feature type="topological domain" description="Extracellular" evidence="1">
    <location>
        <begin position="1"/>
        <end position="27"/>
    </location>
</feature>
<feature type="transmembrane region" description="Helical; Name=1" evidence="1">
    <location>
        <begin position="28"/>
        <end position="48"/>
    </location>
</feature>
<feature type="topological domain" description="Cytoplasmic" evidence="1">
    <location>
        <begin position="49"/>
        <end position="56"/>
    </location>
</feature>
<feature type="transmembrane region" description="Helical; Name=2" evidence="1">
    <location>
        <begin position="57"/>
        <end position="77"/>
    </location>
</feature>
<feature type="topological domain" description="Extracellular" evidence="1">
    <location>
        <begin position="78"/>
        <end position="101"/>
    </location>
</feature>
<feature type="transmembrane region" description="Helical; Name=3" evidence="1">
    <location>
        <begin position="102"/>
        <end position="122"/>
    </location>
</feature>
<feature type="topological domain" description="Cytoplasmic" evidence="1">
    <location>
        <begin position="123"/>
        <end position="141"/>
    </location>
</feature>
<feature type="transmembrane region" description="Helical; Name=4" evidence="1">
    <location>
        <begin position="142"/>
        <end position="162"/>
    </location>
</feature>
<feature type="topological domain" description="Extracellular" evidence="1">
    <location>
        <begin position="163"/>
        <end position="198"/>
    </location>
</feature>
<feature type="transmembrane region" description="Helical; Name=5" evidence="1">
    <location>
        <begin position="199"/>
        <end position="218"/>
    </location>
</feature>
<feature type="topological domain" description="Cytoplasmic" evidence="1">
    <location>
        <begin position="219"/>
        <end position="238"/>
    </location>
</feature>
<feature type="transmembrane region" description="Helical; Name=6" evidence="1">
    <location>
        <begin position="239"/>
        <end position="259"/>
    </location>
</feature>
<feature type="topological domain" description="Extracellular" evidence="1">
    <location>
        <begin position="260"/>
        <end position="274"/>
    </location>
</feature>
<feature type="transmembrane region" description="Helical; Name=7" evidence="1">
    <location>
        <begin position="275"/>
        <end position="295"/>
    </location>
</feature>
<feature type="topological domain" description="Cytoplasmic" evidence="1">
    <location>
        <begin position="296"/>
        <end position="313"/>
    </location>
</feature>
<feature type="glycosylation site" description="N-linked (GlcNAc...) asparagine" evidence="1">
    <location>
        <position position="5"/>
    </location>
</feature>
<feature type="disulfide bond" evidence="2">
    <location>
        <begin position="99"/>
        <end position="191"/>
    </location>
</feature>
<feature type="sequence variant" id="VAR_062075" description="In dbSNP:rs28482315.">
    <original>G</original>
    <variation>C</variation>
    <location>
        <position position="45"/>
    </location>
</feature>
<feature type="sequence variant" id="VAR_024138" description="In dbSNP:rs112749434.">
    <original>G</original>
    <variation>E</variation>
    <location>
        <position position="59"/>
    </location>
</feature>
<feature type="sequence variant" id="VAR_024139" description="In dbSNP:rs2442426.">
    <original>M</original>
    <variation>T</variation>
    <location>
        <position position="288"/>
    </location>
</feature>
<feature type="sequence variant" id="VAR_053305" description="In dbSNP:rs2570573.">
    <original>K</original>
    <variation>N</variation>
    <location>
        <position position="289"/>
    </location>
</feature>